<feature type="chain" id="PRO_0000363712" description="Ras-like protein 1" evidence="2">
    <location>
        <begin position="1"/>
        <end position="178"/>
    </location>
</feature>
<feature type="propeptide" id="PRO_0000363713" description="Removed in mature form" evidence="2">
    <location>
        <begin position="179"/>
        <end position="181"/>
    </location>
</feature>
<feature type="short sequence motif" description="Effector region">
    <location>
        <begin position="32"/>
        <end position="40"/>
    </location>
</feature>
<feature type="binding site" evidence="1">
    <location>
        <begin position="10"/>
        <end position="17"/>
    </location>
    <ligand>
        <name>GTP</name>
        <dbReference type="ChEBI" id="CHEBI:37565"/>
    </ligand>
</feature>
<feature type="binding site" evidence="1">
    <location>
        <begin position="57"/>
        <end position="61"/>
    </location>
    <ligand>
        <name>GTP</name>
        <dbReference type="ChEBI" id="CHEBI:37565"/>
    </ligand>
</feature>
<feature type="binding site" evidence="1">
    <location>
        <begin position="116"/>
        <end position="119"/>
    </location>
    <ligand>
        <name>GTP</name>
        <dbReference type="ChEBI" id="CHEBI:37565"/>
    </ligand>
</feature>
<feature type="modified residue" description="Cysteine methyl ester" evidence="2">
    <location>
        <position position="178"/>
    </location>
</feature>
<feature type="lipid moiety-binding region" description="S-geranylgeranyl cysteine" evidence="2">
    <location>
        <position position="178"/>
    </location>
</feature>
<comment type="function">
    <text evidence="1 2">Ras proteins bind GDP/GTP and possess intrinsic GTPase activity. Plays a role in eye development by regulating cell growth, survival of postmitotic ommatidial cells and differentiation of photoreceptor cells. During larval development, mediates Ptth/tor signaling leading to the production of ecdysone, a hormone required for the initiation of metamorphosis.</text>
</comment>
<comment type="catalytic activity">
    <reaction evidence="1">
        <text>GTP + H2O = GDP + phosphate + H(+)</text>
        <dbReference type="Rhea" id="RHEA:19669"/>
        <dbReference type="ChEBI" id="CHEBI:15377"/>
        <dbReference type="ChEBI" id="CHEBI:15378"/>
        <dbReference type="ChEBI" id="CHEBI:37565"/>
        <dbReference type="ChEBI" id="CHEBI:43474"/>
        <dbReference type="ChEBI" id="CHEBI:58189"/>
        <dbReference type="EC" id="3.6.5.2"/>
    </reaction>
</comment>
<comment type="activity regulation">
    <text>Alternates between an inactive form bound to GDP and an active form bound to GTP. Activated by a guanine nucleotide-exchange factor (GEF) and inactivated by a GTPase-activating protein (GAP).</text>
</comment>
<comment type="subcellular location">
    <subcellularLocation>
        <location evidence="2">Cell membrane</location>
        <topology evidence="2">Lipid-anchor</topology>
        <orientation evidence="2">Cytoplasmic side</orientation>
    </subcellularLocation>
</comment>
<comment type="similarity">
    <text evidence="3">Belongs to the small GTPase superfamily. Ras family.</text>
</comment>
<name>RAS1_DROMO</name>
<sequence length="181" mass="20621">MTEYKLVVVGAGGVGKSALTIQLIQNHFVDEYDPTIEDSYRKQVVIDGETCLLDILDTAGQEEYSAMRDQYMRTGEGFLLVFAVNSAKSFEDIGTYREQIKRVKDAEEVPMVLVGNKCDLPSWNVAKQYGIPYIETSAKTRMGVDDAFYTLVREIRKDKDNKGRKGRKTNKPNRRFKCKML</sequence>
<organism>
    <name type="scientific">Drosophila mojavensis</name>
    <name type="common">Fruit fly</name>
    <dbReference type="NCBI Taxonomy" id="7230"/>
    <lineage>
        <taxon>Eukaryota</taxon>
        <taxon>Metazoa</taxon>
        <taxon>Ecdysozoa</taxon>
        <taxon>Arthropoda</taxon>
        <taxon>Hexapoda</taxon>
        <taxon>Insecta</taxon>
        <taxon>Pterygota</taxon>
        <taxon>Neoptera</taxon>
        <taxon>Endopterygota</taxon>
        <taxon>Diptera</taxon>
        <taxon>Brachycera</taxon>
        <taxon>Muscomorpha</taxon>
        <taxon>Ephydroidea</taxon>
        <taxon>Drosophilidae</taxon>
        <taxon>Drosophila</taxon>
    </lineage>
</organism>
<evidence type="ECO:0000250" key="1">
    <source>
        <dbReference type="UniProtKB" id="P01112"/>
    </source>
</evidence>
<evidence type="ECO:0000250" key="2">
    <source>
        <dbReference type="UniProtKB" id="P08646"/>
    </source>
</evidence>
<evidence type="ECO:0000255" key="3"/>
<evidence type="ECO:0000312" key="4">
    <source>
        <dbReference type="EMBL" id="EDW15764.1"/>
    </source>
</evidence>
<gene>
    <name evidence="2" type="primary">Ras85D</name>
    <name type="ORF">GI22599</name>
</gene>
<protein>
    <recommendedName>
        <fullName evidence="2">Ras-like protein 1</fullName>
        <ecNumber evidence="1">3.6.5.2</ecNumber>
    </recommendedName>
</protein>
<keyword id="KW-1003">Cell membrane</keyword>
<keyword id="KW-0342">GTP-binding</keyword>
<keyword id="KW-0378">Hydrolase</keyword>
<keyword id="KW-0449">Lipoprotein</keyword>
<keyword id="KW-0472">Membrane</keyword>
<keyword id="KW-0488">Methylation</keyword>
<keyword id="KW-0547">Nucleotide-binding</keyword>
<keyword id="KW-0636">Prenylation</keyword>
<keyword id="KW-1185">Reference proteome</keyword>
<proteinExistence type="inferred from homology"/>
<dbReference type="EC" id="3.6.5.2" evidence="1"/>
<dbReference type="EMBL" id="CH933806">
    <property type="protein sequence ID" value="EDW15764.1"/>
    <property type="molecule type" value="Genomic_DNA"/>
</dbReference>
<dbReference type="RefSeq" id="XP_002000303.2">
    <property type="nucleotide sequence ID" value="XM_002000267.2"/>
</dbReference>
<dbReference type="SMR" id="B4KB60"/>
<dbReference type="FunCoup" id="B4KB60">
    <property type="interactions" value="1160"/>
</dbReference>
<dbReference type="GeneID" id="6574247"/>
<dbReference type="KEGG" id="dmo:Dmoj_GI22599"/>
<dbReference type="CTD" id="41140"/>
<dbReference type="eggNOG" id="KOG0395">
    <property type="taxonomic scope" value="Eukaryota"/>
</dbReference>
<dbReference type="HOGENOM" id="CLU_041217_9_8_1"/>
<dbReference type="InParanoid" id="B4KB60"/>
<dbReference type="OMA" id="CCGGCVI"/>
<dbReference type="OrthoDB" id="5976022at2759"/>
<dbReference type="PhylomeDB" id="B4KB60"/>
<dbReference type="ChiTaRS" id="Ras85D">
    <property type="organism name" value="fly"/>
</dbReference>
<dbReference type="Proteomes" id="UP000009192">
    <property type="component" value="Unassembled WGS sequence"/>
</dbReference>
<dbReference type="GO" id="GO:0016020">
    <property type="term" value="C:membrane"/>
    <property type="evidence" value="ECO:0000250"/>
    <property type="project" value="UniProtKB"/>
</dbReference>
<dbReference type="GO" id="GO:0005886">
    <property type="term" value="C:plasma membrane"/>
    <property type="evidence" value="ECO:0007669"/>
    <property type="project" value="UniProtKB-SubCell"/>
</dbReference>
<dbReference type="GO" id="GO:0003925">
    <property type="term" value="F:G protein activity"/>
    <property type="evidence" value="ECO:0007669"/>
    <property type="project" value="UniProtKB-EC"/>
</dbReference>
<dbReference type="GO" id="GO:0005525">
    <property type="term" value="F:GTP binding"/>
    <property type="evidence" value="ECO:0007669"/>
    <property type="project" value="UniProtKB-KW"/>
</dbReference>
<dbReference type="GO" id="GO:0007165">
    <property type="term" value="P:signal transduction"/>
    <property type="evidence" value="ECO:0007669"/>
    <property type="project" value="InterPro"/>
</dbReference>
<dbReference type="CDD" id="cd04138">
    <property type="entry name" value="H_N_K_Ras_like"/>
    <property type="match status" value="1"/>
</dbReference>
<dbReference type="FunFam" id="3.40.50.300:FF:000096">
    <property type="entry name" value="KRAS proto-oncogene, GTPase"/>
    <property type="match status" value="1"/>
</dbReference>
<dbReference type="Gene3D" id="3.40.50.300">
    <property type="entry name" value="P-loop containing nucleotide triphosphate hydrolases"/>
    <property type="match status" value="1"/>
</dbReference>
<dbReference type="InterPro" id="IPR027417">
    <property type="entry name" value="P-loop_NTPase"/>
</dbReference>
<dbReference type="InterPro" id="IPR005225">
    <property type="entry name" value="Small_GTP-bd"/>
</dbReference>
<dbReference type="InterPro" id="IPR001806">
    <property type="entry name" value="Small_GTPase"/>
</dbReference>
<dbReference type="InterPro" id="IPR020849">
    <property type="entry name" value="Small_GTPase_Ras-type"/>
</dbReference>
<dbReference type="NCBIfam" id="TIGR00231">
    <property type="entry name" value="small_GTP"/>
    <property type="match status" value="1"/>
</dbReference>
<dbReference type="PANTHER" id="PTHR24070">
    <property type="entry name" value="RAS, DI-RAS, AND RHEB FAMILY MEMBERS OF SMALL GTPASE SUPERFAMILY"/>
    <property type="match status" value="1"/>
</dbReference>
<dbReference type="Pfam" id="PF00071">
    <property type="entry name" value="Ras"/>
    <property type="match status" value="1"/>
</dbReference>
<dbReference type="PRINTS" id="PR00449">
    <property type="entry name" value="RASTRNSFRMNG"/>
</dbReference>
<dbReference type="SMART" id="SM00175">
    <property type="entry name" value="RAB"/>
    <property type="match status" value="1"/>
</dbReference>
<dbReference type="SMART" id="SM00173">
    <property type="entry name" value="RAS"/>
    <property type="match status" value="1"/>
</dbReference>
<dbReference type="SMART" id="SM00174">
    <property type="entry name" value="RHO"/>
    <property type="match status" value="1"/>
</dbReference>
<dbReference type="SUPFAM" id="SSF52540">
    <property type="entry name" value="P-loop containing nucleoside triphosphate hydrolases"/>
    <property type="match status" value="1"/>
</dbReference>
<dbReference type="PROSITE" id="PS51421">
    <property type="entry name" value="RAS"/>
    <property type="match status" value="1"/>
</dbReference>
<reference evidence="4" key="1">
    <citation type="journal article" date="2007" name="Nature">
        <title>Evolution of genes and genomes on the Drosophila phylogeny.</title>
        <authorList>
            <consortium name="Drosophila 12 genomes consortium"/>
        </authorList>
    </citation>
    <scope>NUCLEOTIDE SEQUENCE [LARGE SCALE GENOMIC DNA]</scope>
    <source>
        <strain evidence="4">Tucson 15081-1352.22</strain>
    </source>
</reference>
<accession>B4KB60</accession>